<comment type="similarity">
    <text evidence="1">Belongs to the bacterial ribosomal protein bS16 family.</text>
</comment>
<protein>
    <recommendedName>
        <fullName evidence="1">Small ribosomal subunit protein bS16</fullName>
    </recommendedName>
    <alternativeName>
        <fullName evidence="2">30S ribosomal protein S16</fullName>
    </alternativeName>
</protein>
<accession>B1MZU5</accession>
<organism>
    <name type="scientific">Leuconostoc citreum (strain KM20)</name>
    <dbReference type="NCBI Taxonomy" id="349519"/>
    <lineage>
        <taxon>Bacteria</taxon>
        <taxon>Bacillati</taxon>
        <taxon>Bacillota</taxon>
        <taxon>Bacilli</taxon>
        <taxon>Lactobacillales</taxon>
        <taxon>Lactobacillaceae</taxon>
        <taxon>Leuconostoc</taxon>
    </lineage>
</organism>
<evidence type="ECO:0000255" key="1">
    <source>
        <dbReference type="HAMAP-Rule" id="MF_00385"/>
    </source>
</evidence>
<evidence type="ECO:0000305" key="2"/>
<dbReference type="EMBL" id="DQ489736">
    <property type="protein sequence ID" value="ACA83047.1"/>
    <property type="molecule type" value="Genomic_DNA"/>
</dbReference>
<dbReference type="RefSeq" id="WP_012305352.1">
    <property type="nucleotide sequence ID" value="NC_010471.1"/>
</dbReference>
<dbReference type="SMR" id="B1MZU5"/>
<dbReference type="STRING" id="349519.LCK_01222"/>
<dbReference type="KEGG" id="lci:LCK_01222"/>
<dbReference type="eggNOG" id="COG0228">
    <property type="taxonomic scope" value="Bacteria"/>
</dbReference>
<dbReference type="HOGENOM" id="CLU_100590_3_2_9"/>
<dbReference type="OrthoDB" id="9807878at2"/>
<dbReference type="Proteomes" id="UP000002166">
    <property type="component" value="Chromosome"/>
</dbReference>
<dbReference type="GO" id="GO:0005737">
    <property type="term" value="C:cytoplasm"/>
    <property type="evidence" value="ECO:0007669"/>
    <property type="project" value="UniProtKB-ARBA"/>
</dbReference>
<dbReference type="GO" id="GO:0015935">
    <property type="term" value="C:small ribosomal subunit"/>
    <property type="evidence" value="ECO:0007669"/>
    <property type="project" value="TreeGrafter"/>
</dbReference>
<dbReference type="GO" id="GO:0003735">
    <property type="term" value="F:structural constituent of ribosome"/>
    <property type="evidence" value="ECO:0007669"/>
    <property type="project" value="InterPro"/>
</dbReference>
<dbReference type="GO" id="GO:0006412">
    <property type="term" value="P:translation"/>
    <property type="evidence" value="ECO:0007669"/>
    <property type="project" value="UniProtKB-UniRule"/>
</dbReference>
<dbReference type="FunFam" id="3.30.1320.10:FF:000002">
    <property type="entry name" value="30S ribosomal protein S16"/>
    <property type="match status" value="1"/>
</dbReference>
<dbReference type="Gene3D" id="3.30.1320.10">
    <property type="match status" value="1"/>
</dbReference>
<dbReference type="Gene3D" id="1.10.720.30">
    <property type="entry name" value="SAP domain"/>
    <property type="match status" value="1"/>
</dbReference>
<dbReference type="HAMAP" id="MF_00385">
    <property type="entry name" value="Ribosomal_bS16"/>
    <property type="match status" value="1"/>
</dbReference>
<dbReference type="InterPro" id="IPR000307">
    <property type="entry name" value="Ribosomal_bS16"/>
</dbReference>
<dbReference type="InterPro" id="IPR020592">
    <property type="entry name" value="Ribosomal_bS16_CS"/>
</dbReference>
<dbReference type="InterPro" id="IPR023803">
    <property type="entry name" value="Ribosomal_bS16_dom_sf"/>
</dbReference>
<dbReference type="InterPro" id="IPR036361">
    <property type="entry name" value="SAP_dom_sf"/>
</dbReference>
<dbReference type="NCBIfam" id="TIGR00002">
    <property type="entry name" value="S16"/>
    <property type="match status" value="1"/>
</dbReference>
<dbReference type="PANTHER" id="PTHR12919">
    <property type="entry name" value="30S RIBOSOMAL PROTEIN S16"/>
    <property type="match status" value="1"/>
</dbReference>
<dbReference type="PANTHER" id="PTHR12919:SF20">
    <property type="entry name" value="SMALL RIBOSOMAL SUBUNIT PROTEIN BS16M"/>
    <property type="match status" value="1"/>
</dbReference>
<dbReference type="Pfam" id="PF00886">
    <property type="entry name" value="Ribosomal_S16"/>
    <property type="match status" value="1"/>
</dbReference>
<dbReference type="SUPFAM" id="SSF54565">
    <property type="entry name" value="Ribosomal protein S16"/>
    <property type="match status" value="1"/>
</dbReference>
<dbReference type="PROSITE" id="PS00732">
    <property type="entry name" value="RIBOSOMAL_S16"/>
    <property type="match status" value="1"/>
</dbReference>
<feature type="chain" id="PRO_1000196427" description="Small ribosomal subunit protein bS16">
    <location>
        <begin position="1"/>
        <end position="137"/>
    </location>
</feature>
<name>RS16_LEUCK</name>
<gene>
    <name evidence="1" type="primary">rpsP</name>
    <name type="ordered locus">LCK_01222</name>
</gene>
<reference key="1">
    <citation type="journal article" date="2008" name="J. Bacteriol.">
        <title>Complete genome sequence of Leuconostoc citreum KM20.</title>
        <authorList>
            <person name="Kim J.F."/>
            <person name="Jeong H."/>
            <person name="Lee J.-S."/>
            <person name="Choi S.-H."/>
            <person name="Ha M."/>
            <person name="Hur C.-G."/>
            <person name="Kim J.-S."/>
            <person name="Lee S."/>
            <person name="Park H.-S."/>
            <person name="Park Y.-H."/>
            <person name="Oh T.K."/>
        </authorList>
    </citation>
    <scope>NUCLEOTIDE SEQUENCE [LARGE SCALE GENOMIC DNA]</scope>
    <source>
        <strain>KM20</strain>
    </source>
</reference>
<keyword id="KW-1185">Reference proteome</keyword>
<keyword id="KW-0687">Ribonucleoprotein</keyword>
<keyword id="KW-0689">Ribosomal protein</keyword>
<proteinExistence type="inferred from homology"/>
<sequence length="137" mass="14762">MSVKIRLKRMGAKKRPFYRVVIADSRSPRDGRFIETVGTYNPIAQPAEIKLDEAKILTWLSNGAQPSDTARNLLSNAGILAKFAEVKAAKKSTAAKPAASATKPTEKNTVAEIKAYLDAQGTQYASSAKKADLLALV</sequence>